<gene>
    <name evidence="1" type="primary">argR</name>
    <name type="ordered locus">MAV_3113</name>
</gene>
<name>ARGR_MYCA1</name>
<accession>A0QHA9</accession>
<sequence length="164" mass="16864">MTRSKSAPETTRAARQARIVAILSSAQVRSQSELAALLADEGIEVTQATLSRDLEELGAVKLRGADGGVGVYMVPEDGSPVRGVSGGTARLSRLLSELLVSADASANLAVLRTPPGAADYLASAIDRAALPYVVGTIAGDDTVFVAARDPMTGAELADTLEKLT</sequence>
<evidence type="ECO:0000255" key="1">
    <source>
        <dbReference type="HAMAP-Rule" id="MF_00173"/>
    </source>
</evidence>
<keyword id="KW-0028">Amino-acid biosynthesis</keyword>
<keyword id="KW-0055">Arginine biosynthesis</keyword>
<keyword id="KW-0963">Cytoplasm</keyword>
<keyword id="KW-0238">DNA-binding</keyword>
<keyword id="KW-0678">Repressor</keyword>
<keyword id="KW-0804">Transcription</keyword>
<keyword id="KW-0805">Transcription regulation</keyword>
<dbReference type="EMBL" id="CP000479">
    <property type="protein sequence ID" value="ABK68537.1"/>
    <property type="molecule type" value="Genomic_DNA"/>
</dbReference>
<dbReference type="RefSeq" id="WP_011725265.1">
    <property type="nucleotide sequence ID" value="NC_008595.1"/>
</dbReference>
<dbReference type="SMR" id="A0QHA9"/>
<dbReference type="KEGG" id="mav:MAV_3113"/>
<dbReference type="HOGENOM" id="CLU_097103_1_1_11"/>
<dbReference type="UniPathway" id="UPA00068"/>
<dbReference type="Proteomes" id="UP000001574">
    <property type="component" value="Chromosome"/>
</dbReference>
<dbReference type="GO" id="GO:0005737">
    <property type="term" value="C:cytoplasm"/>
    <property type="evidence" value="ECO:0007669"/>
    <property type="project" value="UniProtKB-SubCell"/>
</dbReference>
<dbReference type="GO" id="GO:0034618">
    <property type="term" value="F:arginine binding"/>
    <property type="evidence" value="ECO:0007669"/>
    <property type="project" value="InterPro"/>
</dbReference>
<dbReference type="GO" id="GO:0003677">
    <property type="term" value="F:DNA binding"/>
    <property type="evidence" value="ECO:0007669"/>
    <property type="project" value="UniProtKB-KW"/>
</dbReference>
<dbReference type="GO" id="GO:0003700">
    <property type="term" value="F:DNA-binding transcription factor activity"/>
    <property type="evidence" value="ECO:0007669"/>
    <property type="project" value="UniProtKB-UniRule"/>
</dbReference>
<dbReference type="GO" id="GO:0006526">
    <property type="term" value="P:L-arginine biosynthetic process"/>
    <property type="evidence" value="ECO:0007669"/>
    <property type="project" value="UniProtKB-UniPathway"/>
</dbReference>
<dbReference type="GO" id="GO:0051259">
    <property type="term" value="P:protein complex oligomerization"/>
    <property type="evidence" value="ECO:0007669"/>
    <property type="project" value="InterPro"/>
</dbReference>
<dbReference type="GO" id="GO:1900079">
    <property type="term" value="P:regulation of arginine biosynthetic process"/>
    <property type="evidence" value="ECO:0007669"/>
    <property type="project" value="UniProtKB-UniRule"/>
</dbReference>
<dbReference type="FunFam" id="1.10.10.10:FF:000667">
    <property type="entry name" value="Arginine repressor"/>
    <property type="match status" value="1"/>
</dbReference>
<dbReference type="Gene3D" id="3.30.1360.40">
    <property type="match status" value="1"/>
</dbReference>
<dbReference type="Gene3D" id="1.10.10.10">
    <property type="entry name" value="Winged helix-like DNA-binding domain superfamily/Winged helix DNA-binding domain"/>
    <property type="match status" value="1"/>
</dbReference>
<dbReference type="HAMAP" id="MF_00173">
    <property type="entry name" value="Arg_repressor"/>
    <property type="match status" value="1"/>
</dbReference>
<dbReference type="InterPro" id="IPR001669">
    <property type="entry name" value="Arg_repress"/>
</dbReference>
<dbReference type="InterPro" id="IPR020899">
    <property type="entry name" value="Arg_repress_C"/>
</dbReference>
<dbReference type="InterPro" id="IPR036251">
    <property type="entry name" value="Arg_repress_C_sf"/>
</dbReference>
<dbReference type="InterPro" id="IPR020900">
    <property type="entry name" value="Arg_repress_DNA-bd"/>
</dbReference>
<dbReference type="InterPro" id="IPR036388">
    <property type="entry name" value="WH-like_DNA-bd_sf"/>
</dbReference>
<dbReference type="InterPro" id="IPR036390">
    <property type="entry name" value="WH_DNA-bd_sf"/>
</dbReference>
<dbReference type="NCBIfam" id="TIGR01529">
    <property type="entry name" value="argR_whole"/>
    <property type="match status" value="1"/>
</dbReference>
<dbReference type="NCBIfam" id="NF002880">
    <property type="entry name" value="PRK03341.1"/>
    <property type="match status" value="1"/>
</dbReference>
<dbReference type="PANTHER" id="PTHR34471">
    <property type="entry name" value="ARGININE REPRESSOR"/>
    <property type="match status" value="1"/>
</dbReference>
<dbReference type="PANTHER" id="PTHR34471:SF1">
    <property type="entry name" value="ARGININE REPRESSOR"/>
    <property type="match status" value="1"/>
</dbReference>
<dbReference type="Pfam" id="PF01316">
    <property type="entry name" value="Arg_repressor"/>
    <property type="match status" value="1"/>
</dbReference>
<dbReference type="Pfam" id="PF02863">
    <property type="entry name" value="Arg_repressor_C"/>
    <property type="match status" value="1"/>
</dbReference>
<dbReference type="PRINTS" id="PR01467">
    <property type="entry name" value="ARGREPRESSOR"/>
</dbReference>
<dbReference type="SUPFAM" id="SSF55252">
    <property type="entry name" value="C-terminal domain of arginine repressor"/>
    <property type="match status" value="1"/>
</dbReference>
<dbReference type="SUPFAM" id="SSF46785">
    <property type="entry name" value="Winged helix' DNA-binding domain"/>
    <property type="match status" value="1"/>
</dbReference>
<proteinExistence type="inferred from homology"/>
<reference key="1">
    <citation type="submission" date="2006-10" db="EMBL/GenBank/DDBJ databases">
        <authorList>
            <person name="Fleischmann R.D."/>
            <person name="Dodson R.J."/>
            <person name="Haft D.H."/>
            <person name="Merkel J.S."/>
            <person name="Nelson W.C."/>
            <person name="Fraser C.M."/>
        </authorList>
    </citation>
    <scope>NUCLEOTIDE SEQUENCE [LARGE SCALE GENOMIC DNA]</scope>
    <source>
        <strain>104</strain>
    </source>
</reference>
<feature type="chain" id="PRO_1000023579" description="Arginine repressor">
    <location>
        <begin position="1"/>
        <end position="164"/>
    </location>
</feature>
<organism>
    <name type="scientific">Mycobacterium avium (strain 104)</name>
    <dbReference type="NCBI Taxonomy" id="243243"/>
    <lineage>
        <taxon>Bacteria</taxon>
        <taxon>Bacillati</taxon>
        <taxon>Actinomycetota</taxon>
        <taxon>Actinomycetes</taxon>
        <taxon>Mycobacteriales</taxon>
        <taxon>Mycobacteriaceae</taxon>
        <taxon>Mycobacterium</taxon>
        <taxon>Mycobacterium avium complex (MAC)</taxon>
    </lineage>
</organism>
<protein>
    <recommendedName>
        <fullName evidence="1">Arginine repressor</fullName>
    </recommendedName>
</protein>
<comment type="function">
    <text evidence="1">Regulates arginine biosynthesis genes.</text>
</comment>
<comment type="pathway">
    <text>Amino-acid biosynthesis; L-arginine biosynthesis [regulation].</text>
</comment>
<comment type="subcellular location">
    <subcellularLocation>
        <location evidence="1">Cytoplasm</location>
    </subcellularLocation>
</comment>
<comment type="similarity">
    <text evidence="1">Belongs to the ArgR family.</text>
</comment>